<proteinExistence type="inferred from homology"/>
<feature type="chain" id="PRO_0000335831" description="Argininosuccinate lyase">
    <location>
        <begin position="1"/>
        <end position="471"/>
    </location>
</feature>
<reference key="1">
    <citation type="journal article" date="2008" name="J. Bacteriol.">
        <title>Genome sequence of the fish pathogen Renibacterium salmoninarum suggests reductive evolution away from an environmental Arthrobacter ancestor.</title>
        <authorList>
            <person name="Wiens G.D."/>
            <person name="Rockey D.D."/>
            <person name="Wu Z."/>
            <person name="Chang J."/>
            <person name="Levy R."/>
            <person name="Crane S."/>
            <person name="Chen D.S."/>
            <person name="Capri G.R."/>
            <person name="Burnett J.R."/>
            <person name="Sudheesh P.S."/>
            <person name="Schipma M.J."/>
            <person name="Burd H."/>
            <person name="Bhattacharyya A."/>
            <person name="Rhodes L.D."/>
            <person name="Kaul R."/>
            <person name="Strom M.S."/>
        </authorList>
    </citation>
    <scope>NUCLEOTIDE SEQUENCE [LARGE SCALE GENOMIC DNA]</scope>
    <source>
        <strain>ATCC 33209 / DSM 20767 / JCM 11484 / NBRC 15589 / NCIMB 2235</strain>
    </source>
</reference>
<sequence length="471" mass="50186">MTSATNGGSLWGARFAGAPADALAALSKSTHFDWRLARYDLAGSRAHARVLQRAGLLTDVELDGMLTALDGLDADVTSGAFVAAESDEDVHGALERGLIERAGPELGGKLRAGRSRNDQIAAFGRMFLRDHARLVARGVLATIDALLAQATAHHGVAMPGRTHLQHAQPVLLSHHLMAHAWALLRDVQRLQDWDRRAAVSPYGSGALAGSSLGLDPNAVADELGFDSAVWNSIDGTASRDVFAEFSWIAAMIGVDLSRISEEIILWATKEFSFVTLDDAFSTGSSIMPQKKNPDVAELARGKAGRLIGDLTGLLATLKGLPLAYNRDLQEDKEPVFDAADTLELLLPAVSGMIATLDFNTERMEELAPLGFALATDVADWLVRQGVPFRDAHELSGAAVKQAESRGVELWDLSDAEYAAISPQLTPELRTVLSTEGSLASRSAQGGTAPSAVLAQRAAFEAQLAPVRDFAR</sequence>
<accession>A9WQ91</accession>
<keyword id="KW-0028">Amino-acid biosynthesis</keyword>
<keyword id="KW-0055">Arginine biosynthesis</keyword>
<keyword id="KW-0963">Cytoplasm</keyword>
<keyword id="KW-0456">Lyase</keyword>
<keyword id="KW-1185">Reference proteome</keyword>
<gene>
    <name evidence="1" type="primary">argH</name>
    <name type="ordered locus">RSal33209_0784</name>
</gene>
<protein>
    <recommendedName>
        <fullName evidence="1">Argininosuccinate lyase</fullName>
        <shortName evidence="1">ASAL</shortName>
        <ecNumber evidence="1">4.3.2.1</ecNumber>
    </recommendedName>
    <alternativeName>
        <fullName evidence="1">Arginosuccinase</fullName>
    </alternativeName>
</protein>
<comment type="catalytic activity">
    <reaction evidence="1">
        <text>2-(N(omega)-L-arginino)succinate = fumarate + L-arginine</text>
        <dbReference type="Rhea" id="RHEA:24020"/>
        <dbReference type="ChEBI" id="CHEBI:29806"/>
        <dbReference type="ChEBI" id="CHEBI:32682"/>
        <dbReference type="ChEBI" id="CHEBI:57472"/>
        <dbReference type="EC" id="4.3.2.1"/>
    </reaction>
</comment>
<comment type="pathway">
    <text evidence="1">Amino-acid biosynthesis; L-arginine biosynthesis; L-arginine from L-ornithine and carbamoyl phosphate: step 3/3.</text>
</comment>
<comment type="subcellular location">
    <subcellularLocation>
        <location evidence="1">Cytoplasm</location>
    </subcellularLocation>
</comment>
<comment type="similarity">
    <text evidence="1">Belongs to the lyase 1 family. Argininosuccinate lyase subfamily.</text>
</comment>
<name>ARLY_RENSM</name>
<evidence type="ECO:0000255" key="1">
    <source>
        <dbReference type="HAMAP-Rule" id="MF_00006"/>
    </source>
</evidence>
<organism>
    <name type="scientific">Renibacterium salmoninarum (strain ATCC 33209 / DSM 20767 / JCM 11484 / NBRC 15589 / NCIMB 2235)</name>
    <dbReference type="NCBI Taxonomy" id="288705"/>
    <lineage>
        <taxon>Bacteria</taxon>
        <taxon>Bacillati</taxon>
        <taxon>Actinomycetota</taxon>
        <taxon>Actinomycetes</taxon>
        <taxon>Micrococcales</taxon>
        <taxon>Micrococcaceae</taxon>
        <taxon>Renibacterium</taxon>
    </lineage>
</organism>
<dbReference type="EC" id="4.3.2.1" evidence="1"/>
<dbReference type="EMBL" id="CP000910">
    <property type="protein sequence ID" value="ABY22531.1"/>
    <property type="molecule type" value="Genomic_DNA"/>
</dbReference>
<dbReference type="RefSeq" id="WP_012244228.1">
    <property type="nucleotide sequence ID" value="NC_010168.1"/>
</dbReference>
<dbReference type="SMR" id="A9WQ91"/>
<dbReference type="STRING" id="288705.RSal33209_0784"/>
<dbReference type="KEGG" id="rsa:RSal33209_0784"/>
<dbReference type="eggNOG" id="COG0165">
    <property type="taxonomic scope" value="Bacteria"/>
</dbReference>
<dbReference type="HOGENOM" id="CLU_027272_2_2_11"/>
<dbReference type="UniPathway" id="UPA00068">
    <property type="reaction ID" value="UER00114"/>
</dbReference>
<dbReference type="Proteomes" id="UP000002007">
    <property type="component" value="Chromosome"/>
</dbReference>
<dbReference type="GO" id="GO:0005829">
    <property type="term" value="C:cytosol"/>
    <property type="evidence" value="ECO:0007669"/>
    <property type="project" value="TreeGrafter"/>
</dbReference>
<dbReference type="GO" id="GO:0004056">
    <property type="term" value="F:argininosuccinate lyase activity"/>
    <property type="evidence" value="ECO:0007669"/>
    <property type="project" value="UniProtKB-UniRule"/>
</dbReference>
<dbReference type="GO" id="GO:0042450">
    <property type="term" value="P:arginine biosynthetic process via ornithine"/>
    <property type="evidence" value="ECO:0007669"/>
    <property type="project" value="InterPro"/>
</dbReference>
<dbReference type="GO" id="GO:0006526">
    <property type="term" value="P:L-arginine biosynthetic process"/>
    <property type="evidence" value="ECO:0007669"/>
    <property type="project" value="UniProtKB-UniRule"/>
</dbReference>
<dbReference type="CDD" id="cd01359">
    <property type="entry name" value="Argininosuccinate_lyase"/>
    <property type="match status" value="1"/>
</dbReference>
<dbReference type="FunFam" id="1.10.40.30:FF:000001">
    <property type="entry name" value="Argininosuccinate lyase"/>
    <property type="match status" value="1"/>
</dbReference>
<dbReference type="FunFam" id="1.20.200.10:FF:000015">
    <property type="entry name" value="argininosuccinate lyase isoform X2"/>
    <property type="match status" value="1"/>
</dbReference>
<dbReference type="Gene3D" id="1.10.40.30">
    <property type="entry name" value="Fumarase/aspartase (C-terminal domain)"/>
    <property type="match status" value="1"/>
</dbReference>
<dbReference type="Gene3D" id="1.20.200.10">
    <property type="entry name" value="Fumarase/aspartase (Central domain)"/>
    <property type="match status" value="1"/>
</dbReference>
<dbReference type="Gene3D" id="1.10.275.10">
    <property type="entry name" value="Fumarase/aspartase (N-terminal domain)"/>
    <property type="match status" value="1"/>
</dbReference>
<dbReference type="HAMAP" id="MF_00006">
    <property type="entry name" value="Arg_succ_lyase"/>
    <property type="match status" value="1"/>
</dbReference>
<dbReference type="InterPro" id="IPR029419">
    <property type="entry name" value="Arg_succ_lyase_C"/>
</dbReference>
<dbReference type="InterPro" id="IPR009049">
    <property type="entry name" value="Argininosuccinate_lyase"/>
</dbReference>
<dbReference type="InterPro" id="IPR024083">
    <property type="entry name" value="Fumarase/histidase_N"/>
</dbReference>
<dbReference type="InterPro" id="IPR020557">
    <property type="entry name" value="Fumarate_lyase_CS"/>
</dbReference>
<dbReference type="InterPro" id="IPR000362">
    <property type="entry name" value="Fumarate_lyase_fam"/>
</dbReference>
<dbReference type="InterPro" id="IPR022761">
    <property type="entry name" value="Fumarate_lyase_N"/>
</dbReference>
<dbReference type="InterPro" id="IPR008948">
    <property type="entry name" value="L-Aspartase-like"/>
</dbReference>
<dbReference type="NCBIfam" id="TIGR00838">
    <property type="entry name" value="argH"/>
    <property type="match status" value="1"/>
</dbReference>
<dbReference type="PANTHER" id="PTHR43814">
    <property type="entry name" value="ARGININOSUCCINATE LYASE"/>
    <property type="match status" value="1"/>
</dbReference>
<dbReference type="PANTHER" id="PTHR43814:SF1">
    <property type="entry name" value="ARGININOSUCCINATE LYASE"/>
    <property type="match status" value="1"/>
</dbReference>
<dbReference type="Pfam" id="PF14698">
    <property type="entry name" value="ASL_C2"/>
    <property type="match status" value="1"/>
</dbReference>
<dbReference type="Pfam" id="PF00206">
    <property type="entry name" value="Lyase_1"/>
    <property type="match status" value="1"/>
</dbReference>
<dbReference type="PRINTS" id="PR00145">
    <property type="entry name" value="ARGSUCLYASE"/>
</dbReference>
<dbReference type="PRINTS" id="PR00149">
    <property type="entry name" value="FUMRATELYASE"/>
</dbReference>
<dbReference type="SUPFAM" id="SSF48557">
    <property type="entry name" value="L-aspartase-like"/>
    <property type="match status" value="1"/>
</dbReference>
<dbReference type="PROSITE" id="PS00163">
    <property type="entry name" value="FUMARATE_LYASES"/>
    <property type="match status" value="1"/>
</dbReference>